<keyword id="KW-0235">DNA replication</keyword>
<keyword id="KW-0236">DNA replication inhibitor</keyword>
<reference key="1">
    <citation type="journal article" date="2006" name="PLoS Genet.">
        <title>The complete genome sequence and comparative genome analysis of the high pathogenicity Yersinia enterocolitica strain 8081.</title>
        <authorList>
            <person name="Thomson N.R."/>
            <person name="Howard S."/>
            <person name="Wren B.W."/>
            <person name="Holden M.T.G."/>
            <person name="Crossman L."/>
            <person name="Challis G.L."/>
            <person name="Churcher C."/>
            <person name="Mungall K."/>
            <person name="Brooks K."/>
            <person name="Chillingworth T."/>
            <person name="Feltwell T."/>
            <person name="Abdellah Z."/>
            <person name="Hauser H."/>
            <person name="Jagels K."/>
            <person name="Maddison M."/>
            <person name="Moule S."/>
            <person name="Sanders M."/>
            <person name="Whitehead S."/>
            <person name="Quail M.A."/>
            <person name="Dougan G."/>
            <person name="Parkhill J."/>
            <person name="Prentice M.B."/>
        </authorList>
    </citation>
    <scope>NUCLEOTIDE SEQUENCE [LARGE SCALE GENOMIC DNA]</scope>
    <source>
        <strain>NCTC 13174 / 8081</strain>
    </source>
</reference>
<accession>A1JL00</accession>
<proteinExistence type="inferred from homology"/>
<organism>
    <name type="scientific">Yersinia enterocolitica serotype O:8 / biotype 1B (strain NCTC 13174 / 8081)</name>
    <dbReference type="NCBI Taxonomy" id="393305"/>
    <lineage>
        <taxon>Bacteria</taxon>
        <taxon>Pseudomonadati</taxon>
        <taxon>Pseudomonadota</taxon>
        <taxon>Gammaproteobacteria</taxon>
        <taxon>Enterobacterales</taxon>
        <taxon>Yersiniaceae</taxon>
        <taxon>Yersinia</taxon>
    </lineage>
</organism>
<feature type="chain" id="PRO_1000164301" description="DnaA regulatory inactivator Hda">
    <location>
        <begin position="1"/>
        <end position="239"/>
    </location>
</feature>
<comment type="function">
    <text evidence="1">Mediates the interaction of DNA replication initiator protein DnaA with DNA polymerase subunit beta sliding clamp (dnaN). Stimulates hydrolysis of ATP-DnaA to ADP-DnaA, rendering DnaA inactive for reinitiation, a process called regulatory inhibition of DnaA or RIDA (By similarity).</text>
</comment>
<comment type="subunit">
    <text evidence="2">The active form seems to be an ADP-bound monomer. Forms the RIDA complex (regulatory inactivation of DnaA) of ATP-DnaA, ADP-Hda and the DNA-loaded beta sliding clamp (dnaN).</text>
</comment>
<comment type="similarity">
    <text evidence="2">Belongs to the DnaA family. HdA subfamily.</text>
</comment>
<evidence type="ECO:0000250" key="1"/>
<evidence type="ECO:0000255" key="2">
    <source>
        <dbReference type="HAMAP-Rule" id="MF_01158"/>
    </source>
</evidence>
<name>HDA_YERE8</name>
<protein>
    <recommendedName>
        <fullName evidence="2">DnaA regulatory inactivator Hda</fullName>
    </recommendedName>
</protein>
<dbReference type="EMBL" id="AM286415">
    <property type="protein sequence ID" value="CAL11225.1"/>
    <property type="molecule type" value="Genomic_DNA"/>
</dbReference>
<dbReference type="RefSeq" id="YP_001005458.1">
    <property type="nucleotide sequence ID" value="NC_008800.1"/>
</dbReference>
<dbReference type="SMR" id="A1JL00"/>
<dbReference type="KEGG" id="yen:YE1130"/>
<dbReference type="PATRIC" id="fig|393305.7.peg.1231"/>
<dbReference type="eggNOG" id="COG0593">
    <property type="taxonomic scope" value="Bacteria"/>
</dbReference>
<dbReference type="HOGENOM" id="CLU_072265_1_1_6"/>
<dbReference type="OrthoDB" id="9784878at2"/>
<dbReference type="Proteomes" id="UP000000642">
    <property type="component" value="Chromosome"/>
</dbReference>
<dbReference type="GO" id="GO:0006270">
    <property type="term" value="P:DNA replication initiation"/>
    <property type="evidence" value="ECO:0007669"/>
    <property type="project" value="TreeGrafter"/>
</dbReference>
<dbReference type="GO" id="GO:0032297">
    <property type="term" value="P:negative regulation of DNA-templated DNA replication initiation"/>
    <property type="evidence" value="ECO:0007669"/>
    <property type="project" value="InterPro"/>
</dbReference>
<dbReference type="FunFam" id="1.10.8.60:FF:000024">
    <property type="entry name" value="DnaA regulatory inactivator Hda"/>
    <property type="match status" value="1"/>
</dbReference>
<dbReference type="FunFam" id="3.40.50.300:FF:000452">
    <property type="entry name" value="DnaA regulatory inactivator Hda"/>
    <property type="match status" value="1"/>
</dbReference>
<dbReference type="Gene3D" id="1.10.8.60">
    <property type="match status" value="1"/>
</dbReference>
<dbReference type="Gene3D" id="3.40.50.300">
    <property type="entry name" value="P-loop containing nucleotide triphosphate hydrolases"/>
    <property type="match status" value="1"/>
</dbReference>
<dbReference type="HAMAP" id="MF_01158">
    <property type="entry name" value="Hda"/>
    <property type="match status" value="1"/>
</dbReference>
<dbReference type="InterPro" id="IPR020591">
    <property type="entry name" value="Chromosome_initiator_DnaA-like"/>
</dbReference>
<dbReference type="InterPro" id="IPR013317">
    <property type="entry name" value="DnaA_dom"/>
</dbReference>
<dbReference type="InterPro" id="IPR017788">
    <property type="entry name" value="Hda"/>
</dbReference>
<dbReference type="InterPro" id="IPR022864">
    <property type="entry name" value="Hda_Enterobact"/>
</dbReference>
<dbReference type="InterPro" id="IPR055199">
    <property type="entry name" value="Hda_lid"/>
</dbReference>
<dbReference type="InterPro" id="IPR027417">
    <property type="entry name" value="P-loop_NTPase"/>
</dbReference>
<dbReference type="NCBIfam" id="TIGR03420">
    <property type="entry name" value="DnaA_homol_Hda"/>
    <property type="match status" value="1"/>
</dbReference>
<dbReference type="NCBIfam" id="NF005982">
    <property type="entry name" value="PRK08084.1"/>
    <property type="match status" value="1"/>
</dbReference>
<dbReference type="PANTHER" id="PTHR30050">
    <property type="entry name" value="CHROMOSOMAL REPLICATION INITIATOR PROTEIN DNAA"/>
    <property type="match status" value="1"/>
</dbReference>
<dbReference type="PANTHER" id="PTHR30050:SF5">
    <property type="entry name" value="DNAA REGULATORY INACTIVATOR HDA"/>
    <property type="match status" value="1"/>
</dbReference>
<dbReference type="Pfam" id="PF00308">
    <property type="entry name" value="Bac_DnaA"/>
    <property type="match status" value="1"/>
</dbReference>
<dbReference type="Pfam" id="PF22688">
    <property type="entry name" value="Hda_lid"/>
    <property type="match status" value="1"/>
</dbReference>
<dbReference type="PRINTS" id="PR00051">
    <property type="entry name" value="DNAA"/>
</dbReference>
<dbReference type="SUPFAM" id="SSF52540">
    <property type="entry name" value="P-loop containing nucleoside triphosphate hydrolases"/>
    <property type="match status" value="1"/>
</dbReference>
<sequence>MLVEVLLNTPAQLSLPLYLPDDETFASFYPGENPSLLAAIQSAVHQSHGSYIYFWSREGGGRSHLLHAACAELSQKGEAVGYVPLDKRAYFVPEVLDGMEQLALVCIDNIECIAGDEQWEMAMFNLYNRIVETGRTRLLITGDRPPRQLNLGLPDLASRLDWGQIYKLQPLSDDEKLQALQLRAKLRGFELPEDVGRFLLKRLDREMRTLFMTLDQLDRASITAQRKLTIPFVKEILSL</sequence>
<gene>
    <name evidence="2" type="primary">hda</name>
    <name type="ordered locus">YE1130</name>
</gene>